<comment type="function">
    <text evidence="1">Catalyzes the attachment of isoleucine to tRNA(Ile). As IleRS can inadvertently accommodate and process structurally similar amino acids such as valine, to avoid such errors it has two additional distinct tRNA(Ile)-dependent editing activities. One activity is designated as 'pretransfer' editing and involves the hydrolysis of activated Val-AMP. The other activity is designated 'posttransfer' editing and involves deacylation of mischarged Val-tRNA(Ile).</text>
</comment>
<comment type="catalytic activity">
    <reaction evidence="1">
        <text>tRNA(Ile) + L-isoleucine + ATP = L-isoleucyl-tRNA(Ile) + AMP + diphosphate</text>
        <dbReference type="Rhea" id="RHEA:11060"/>
        <dbReference type="Rhea" id="RHEA-COMP:9666"/>
        <dbReference type="Rhea" id="RHEA-COMP:9695"/>
        <dbReference type="ChEBI" id="CHEBI:30616"/>
        <dbReference type="ChEBI" id="CHEBI:33019"/>
        <dbReference type="ChEBI" id="CHEBI:58045"/>
        <dbReference type="ChEBI" id="CHEBI:78442"/>
        <dbReference type="ChEBI" id="CHEBI:78528"/>
        <dbReference type="ChEBI" id="CHEBI:456215"/>
        <dbReference type="EC" id="6.1.1.5"/>
    </reaction>
</comment>
<comment type="subunit">
    <text evidence="1">Monomer.</text>
</comment>
<comment type="subcellular location">
    <subcellularLocation>
        <location evidence="1">Cytoplasm</location>
    </subcellularLocation>
</comment>
<comment type="domain">
    <text evidence="1">IleRS has two distinct active sites: one for aminoacylation and one for editing. The misactivated valine is translocated from the active site to the editing site, which sterically excludes the correctly activated isoleucine. The single editing site contains two valyl binding pockets, one specific for each substrate (Val-AMP or Val-tRNA(Ile)).</text>
</comment>
<comment type="similarity">
    <text evidence="1">Belongs to the class-I aminoacyl-tRNA synthetase family. IleS type 1 subfamily.</text>
</comment>
<accession>P0C123</accession>
<accession>Q579P3</accession>
<protein>
    <recommendedName>
        <fullName evidence="1">Isoleucine--tRNA ligase</fullName>
        <ecNumber evidence="1">6.1.1.5</ecNumber>
    </recommendedName>
    <alternativeName>
        <fullName evidence="1">Isoleucyl-tRNA synthetase</fullName>
        <shortName evidence="1">IleRS</shortName>
    </alternativeName>
</protein>
<evidence type="ECO:0000255" key="1">
    <source>
        <dbReference type="HAMAP-Rule" id="MF_02002"/>
    </source>
</evidence>
<name>SYI_BRUAB</name>
<gene>
    <name evidence="1" type="primary">ileS</name>
    <name type="ordered locus">BruAb2_0197</name>
</gene>
<dbReference type="EC" id="6.1.1.5" evidence="1"/>
<dbReference type="EMBL" id="AE017224">
    <property type="protein sequence ID" value="AAX75641.1"/>
    <property type="molecule type" value="Genomic_DNA"/>
</dbReference>
<dbReference type="RefSeq" id="WP_002966382.1">
    <property type="nucleotide sequence ID" value="NC_006933.1"/>
</dbReference>
<dbReference type="SMR" id="P0C123"/>
<dbReference type="EnsemblBacteria" id="AAX75641">
    <property type="protein sequence ID" value="AAX75641"/>
    <property type="gene ID" value="BruAb2_0197"/>
</dbReference>
<dbReference type="GeneID" id="97535610"/>
<dbReference type="KEGG" id="bmb:BruAb2_0197"/>
<dbReference type="HOGENOM" id="CLU_001493_7_1_5"/>
<dbReference type="Proteomes" id="UP000000540">
    <property type="component" value="Chromosome II"/>
</dbReference>
<dbReference type="GO" id="GO:0005829">
    <property type="term" value="C:cytosol"/>
    <property type="evidence" value="ECO:0007669"/>
    <property type="project" value="TreeGrafter"/>
</dbReference>
<dbReference type="GO" id="GO:0002161">
    <property type="term" value="F:aminoacyl-tRNA deacylase activity"/>
    <property type="evidence" value="ECO:0007669"/>
    <property type="project" value="InterPro"/>
</dbReference>
<dbReference type="GO" id="GO:0005524">
    <property type="term" value="F:ATP binding"/>
    <property type="evidence" value="ECO:0007669"/>
    <property type="project" value="UniProtKB-UniRule"/>
</dbReference>
<dbReference type="GO" id="GO:0004822">
    <property type="term" value="F:isoleucine-tRNA ligase activity"/>
    <property type="evidence" value="ECO:0007669"/>
    <property type="project" value="UniProtKB-UniRule"/>
</dbReference>
<dbReference type="GO" id="GO:0000049">
    <property type="term" value="F:tRNA binding"/>
    <property type="evidence" value="ECO:0007669"/>
    <property type="project" value="InterPro"/>
</dbReference>
<dbReference type="GO" id="GO:0006428">
    <property type="term" value="P:isoleucyl-tRNA aminoacylation"/>
    <property type="evidence" value="ECO:0007669"/>
    <property type="project" value="UniProtKB-UniRule"/>
</dbReference>
<dbReference type="CDD" id="cd07960">
    <property type="entry name" value="Anticodon_Ia_Ile_BEm"/>
    <property type="match status" value="1"/>
</dbReference>
<dbReference type="FunFam" id="3.40.50.620:FF:000042">
    <property type="entry name" value="Isoleucine--tRNA ligase"/>
    <property type="match status" value="1"/>
</dbReference>
<dbReference type="Gene3D" id="1.10.730.20">
    <property type="match status" value="1"/>
</dbReference>
<dbReference type="Gene3D" id="3.40.50.620">
    <property type="entry name" value="HUPs"/>
    <property type="match status" value="2"/>
</dbReference>
<dbReference type="Gene3D" id="3.90.740.10">
    <property type="entry name" value="Valyl/Leucyl/Isoleucyl-tRNA synthetase, editing domain"/>
    <property type="match status" value="1"/>
</dbReference>
<dbReference type="HAMAP" id="MF_02002">
    <property type="entry name" value="Ile_tRNA_synth_type1"/>
    <property type="match status" value="1"/>
</dbReference>
<dbReference type="InterPro" id="IPR001412">
    <property type="entry name" value="aa-tRNA-synth_I_CS"/>
</dbReference>
<dbReference type="InterPro" id="IPR002300">
    <property type="entry name" value="aa-tRNA-synth_Ia"/>
</dbReference>
<dbReference type="InterPro" id="IPR033708">
    <property type="entry name" value="Anticodon_Ile_BEm"/>
</dbReference>
<dbReference type="InterPro" id="IPR002301">
    <property type="entry name" value="Ile-tRNA-ligase"/>
</dbReference>
<dbReference type="InterPro" id="IPR023585">
    <property type="entry name" value="Ile-tRNA-ligase_type1"/>
</dbReference>
<dbReference type="InterPro" id="IPR050081">
    <property type="entry name" value="Ile-tRNA_ligase"/>
</dbReference>
<dbReference type="InterPro" id="IPR013155">
    <property type="entry name" value="M/V/L/I-tRNA-synth_anticd-bd"/>
</dbReference>
<dbReference type="InterPro" id="IPR014729">
    <property type="entry name" value="Rossmann-like_a/b/a_fold"/>
</dbReference>
<dbReference type="InterPro" id="IPR009080">
    <property type="entry name" value="tRNAsynth_Ia_anticodon-bd"/>
</dbReference>
<dbReference type="InterPro" id="IPR009008">
    <property type="entry name" value="Val/Leu/Ile-tRNA-synth_edit"/>
</dbReference>
<dbReference type="NCBIfam" id="TIGR00392">
    <property type="entry name" value="ileS"/>
    <property type="match status" value="1"/>
</dbReference>
<dbReference type="PANTHER" id="PTHR42765:SF1">
    <property type="entry name" value="ISOLEUCINE--TRNA LIGASE, MITOCHONDRIAL"/>
    <property type="match status" value="1"/>
</dbReference>
<dbReference type="PANTHER" id="PTHR42765">
    <property type="entry name" value="SOLEUCYL-TRNA SYNTHETASE"/>
    <property type="match status" value="1"/>
</dbReference>
<dbReference type="Pfam" id="PF08264">
    <property type="entry name" value="Anticodon_1"/>
    <property type="match status" value="1"/>
</dbReference>
<dbReference type="Pfam" id="PF00133">
    <property type="entry name" value="tRNA-synt_1"/>
    <property type="match status" value="1"/>
</dbReference>
<dbReference type="PRINTS" id="PR00984">
    <property type="entry name" value="TRNASYNTHILE"/>
</dbReference>
<dbReference type="SUPFAM" id="SSF47323">
    <property type="entry name" value="Anticodon-binding domain of a subclass of class I aminoacyl-tRNA synthetases"/>
    <property type="match status" value="1"/>
</dbReference>
<dbReference type="SUPFAM" id="SSF52374">
    <property type="entry name" value="Nucleotidylyl transferase"/>
    <property type="match status" value="1"/>
</dbReference>
<dbReference type="SUPFAM" id="SSF50677">
    <property type="entry name" value="ValRS/IleRS/LeuRS editing domain"/>
    <property type="match status" value="1"/>
</dbReference>
<dbReference type="PROSITE" id="PS00178">
    <property type="entry name" value="AA_TRNA_LIGASE_I"/>
    <property type="match status" value="1"/>
</dbReference>
<keyword id="KW-0030">Aminoacyl-tRNA synthetase</keyword>
<keyword id="KW-0067">ATP-binding</keyword>
<keyword id="KW-0963">Cytoplasm</keyword>
<keyword id="KW-0436">Ligase</keyword>
<keyword id="KW-0547">Nucleotide-binding</keyword>
<keyword id="KW-0648">Protein biosynthesis</keyword>
<feature type="chain" id="PRO_0000098361" description="Isoleucine--tRNA ligase">
    <location>
        <begin position="1"/>
        <end position="972"/>
    </location>
</feature>
<feature type="short sequence motif" description="'HIGH' region">
    <location>
        <begin position="63"/>
        <end position="73"/>
    </location>
</feature>
<feature type="short sequence motif" description="'KMSKS' region">
    <location>
        <begin position="644"/>
        <end position="648"/>
    </location>
</feature>
<feature type="binding site" evidence="1">
    <location>
        <position position="603"/>
    </location>
    <ligand>
        <name>L-isoleucyl-5'-AMP</name>
        <dbReference type="ChEBI" id="CHEBI:178002"/>
    </ligand>
</feature>
<feature type="binding site" evidence="1">
    <location>
        <position position="647"/>
    </location>
    <ligand>
        <name>ATP</name>
        <dbReference type="ChEBI" id="CHEBI:30616"/>
    </ligand>
</feature>
<sequence>MTDTTKIDYSKTLYLPQTEFPMRAGLPQREPLFVQRWEEMNLYKKLREQAKDRPLYVLHDGPPYANGNIHIGHALNKILKDVITRSFQMRGYNSNYVPGWDCHGLPIEWKIEEKYRAAGKNKDEVPINEFRKECREFASNWIKVQTEEFKRLAILGDFENPYTTMNFHAEARIAGELLKFAASGQLYRGSKPVMWSVVERTALAEAEVEYHDIESDMIWVKFPVAGEVATENDLSGSAVVIWTTTPWTIPGNRAVSYSSRIEYGLFEITEAENDFGPRPGERLVFADKLVEECCAKAKLQFKRLRSVSAEELGKIVLDHPLKGFGGGYEFVVPMLDGDHVTDDAGTGFVHTAPSHGREDFEAWMDNARQLEARGIDPNIPFPVGDDGFYTKDAPGFGPDREGGPARVIDDNGKKGDANKVVIEQLIAADKLFARGRLKHSYPHSWRSKKPVIFRNTPQWFVYMDKNLGDGTTLRSRALKAIDETRFVPAAGQTRLRSMIEGRPDWVLSRQRAWGVPICVFVDEEGNILQDDAVNKRIMDAFEKEGADAWFADGARERFLGARAGEGWTQVRDILDVWFDSGSTHTFTLEDRPDLKWPADVYLEGSDQHRGWFHSSLLESCGTRGRAPYNAVVTHGFTMDEHGKKMSKSLGNTVTPQDVIKESGADILRLWVMTTDYWEDQRLGKSIIQTNIDAYRKLRNTIRWMLGTLAHDEGENVAYADLPELERLMLHRLTELDELVRSGYDTFDFKRIARALVDFMNVELSAFYFDIRKDALYCDAPSSIRRKAALQTVREIFVRLTTWLAPMLPFTMEEAWLDRYPQSVSIHAEQFRPTPAEWRDDVLAEKWRKVRAVRRVVTGALELERADKRIGSSLEAAPVVYIADKSLSDSLEGLDFAEICITSGISVSDAAAPEGAFTLGDVKGVAVVPERAKGEKCARSWRYTTDVGADPEFPEVSARDAAALRELQALGKL</sequence>
<proteinExistence type="inferred from homology"/>
<organism>
    <name type="scientific">Brucella abortus biovar 1 (strain 9-941)</name>
    <dbReference type="NCBI Taxonomy" id="262698"/>
    <lineage>
        <taxon>Bacteria</taxon>
        <taxon>Pseudomonadati</taxon>
        <taxon>Pseudomonadota</taxon>
        <taxon>Alphaproteobacteria</taxon>
        <taxon>Hyphomicrobiales</taxon>
        <taxon>Brucellaceae</taxon>
        <taxon>Brucella/Ochrobactrum group</taxon>
        <taxon>Brucella</taxon>
    </lineage>
</organism>
<reference key="1">
    <citation type="journal article" date="2005" name="J. Bacteriol.">
        <title>Completion of the genome sequence of Brucella abortus and comparison to the highly similar genomes of Brucella melitensis and Brucella suis.</title>
        <authorList>
            <person name="Halling S.M."/>
            <person name="Peterson-Burch B.D."/>
            <person name="Bricker B.J."/>
            <person name="Zuerner R.L."/>
            <person name="Qing Z."/>
            <person name="Li L.-L."/>
            <person name="Kapur V."/>
            <person name="Alt D.P."/>
            <person name="Olsen S.C."/>
        </authorList>
    </citation>
    <scope>NUCLEOTIDE SEQUENCE [LARGE SCALE GENOMIC DNA]</scope>
    <source>
        <strain>9-941</strain>
    </source>
</reference>